<accession>Q02440</accession>
<sequence length="1829" mass="212383">MAASELYTKYARVWIPDPEEVWKSAELLKDYKPGDKVLQLRLEEGKDLEYCLDPKTKELPPLRNPDILVGENDLTALSYLHEPAVLHNLKVRFIDSKLIYTYCGIVLVAINPYEQLPIYGEDIINAYSGQNMGDMDPHIFAVAEEAYKQMARDERNQSIIVSGESGAGKTVSAKYAMRYFATVSGSASEANVEEKVLASNPIMESIGNAKTTRNDNSSRFGKYIEIGFDKRYRIIGANMRTYLLEKSRVVFQAEEERNYHIFYQLCASAALPEFKTLRLGNANYFHYTKQGGSPVIDGIDDAKEMVNTRQACTLLGISDSYQMGIFRILAGILHLGNVEFASRDSDSCAIPPKHDPLTIFCDLMGVDYEEMAHWLCHRKLATATETYIKPISKLHAINARDALAKHIYANLFNWIVDHVNKALHSTVKQHSFIGVLDIYGFETFEINSFEQFCINYANEKLQQQFNMHVFKLEQEEYMKEQIPWTLIDFYDNQPCINLIEAKMGVLDLLDEECKMPKGSDDTWAQKLYNTHLNKCALFEKPRLSNKAFIIKHFADKVEYQCEGFLEKNKDTVYEEQIKVLKSSKKFKLLPELFQDEEKAISPTSATPSGRVPLSRTPVKPAKARPGQTSKEHKKTVGHQFRNSLHLLMETLNATTPHYVRCIKPNDFKFPFTFDEKRAVQQLRACGVLETIRISAAGFPSRWTYQEFFSRYRVLMKQKDVLSDRKQTCKNVLEKLILDKDKYQFGKTKIFFRAGQVAYLEKIRADKLRAACIRIQKTIRGWLMRKKYMRMRRAAITIQRYVRGHQARCYATFLRRTRAAIIIQKFQRMYVVRKRYQCMRDATIALQALLRGYLVRNKYQMMLREHKSIIIQKHVRGWLARVHYHRTLKAIVYLQCCYRRMMAKRELKKLKIEARSVERYKKLHIGLENKIMQLQRKIDEQNKEYKSLLEKMNNLEITYSTETEKLRSDVERLRMSEEEAKNATNRVLSLQEEIAKLRKELHQTQTEKKTIEEWADKYKHETEQLVSELKEQNTLLKTEKEELNRRIHDQAKEITETMEKKLVEETKQLELDLNDERLRYQNLLNEFSRLEERYDDLKDEMNLMVSIPKPGHKRTDSTHSSNESEYTFSSEITEAEDLPLRMEEPSEKKAPLDMSLFLKLQKRVTELEQEKQSLQDELDRKEEQALRAKAKEEERPPIRGAELEYESLKRQELESENKKLKNELNELQKALTETRAPEVTAPGAPAYRVLLDQLTSVSEELEVRKEEVLILRSQLVSQKEAIQPKEDKNTMTDSTILLEDVQKMKDKGEIAQAYIGLKETNRLLESQLQSQKKSHENELESLRGEIQSLKEENNRQQQLLAQNLQLPPEARIEASLQHEITRLTNENLDLMEQLEKQDKTVRKLKKQLKVFAKKIGELEVGQMENISPGQIIDEPIRPVNIPRKEKDFQGMLEYKKEDEQKLVKNLILELKPRGVAVNLIPGLPAYILFMCVRHADYLNDDQKVRSLLTSTINGIKKVLKKRGDDFETVSFWLSNTCRFLHCLKQYSGEEGFMKHNTPRQNEHCLTNFDLAEYRQVLSDLAIQIYQQLVRVLENILQPMIVSGMLEHETIQGVSGVKPTGLRKRTSSIADEGTYTLDSIIRQLNSFHSVMCQHGMDPELIKQVVKQMFYIIGAVTLNNLLLRKDMCSWSKGMQIRYNVSQLEEWLRDKNLMNSGAKETLEPLIQAAQLLQVKKKTDEDAEAICSMCNALTTAQIVKVLNLYTPVNEFEERVLVSFIRTIQLRLRDRKDSPQLLMDAKHIFPVTFPFNPSSLALETIQIPASLGLGFISRV</sequence>
<evidence type="ECO:0000250" key="1"/>
<evidence type="ECO:0000250" key="2">
    <source>
        <dbReference type="UniProtKB" id="Q99104"/>
    </source>
</evidence>
<evidence type="ECO:0000250" key="3">
    <source>
        <dbReference type="UniProtKB" id="Q9QYF3"/>
    </source>
</evidence>
<evidence type="ECO:0000250" key="4">
    <source>
        <dbReference type="UniProtKB" id="Q9Y4I1"/>
    </source>
</evidence>
<evidence type="ECO:0000255" key="5"/>
<evidence type="ECO:0000255" key="6">
    <source>
        <dbReference type="PROSITE-ProRule" id="PRU00116"/>
    </source>
</evidence>
<evidence type="ECO:0000255" key="7">
    <source>
        <dbReference type="PROSITE-ProRule" id="PRU00503"/>
    </source>
</evidence>
<evidence type="ECO:0000255" key="8">
    <source>
        <dbReference type="PROSITE-ProRule" id="PRU00782"/>
    </source>
</evidence>
<evidence type="ECO:0000255" key="9">
    <source>
        <dbReference type="PROSITE-ProRule" id="PRU01190"/>
    </source>
</evidence>
<evidence type="ECO:0000256" key="10">
    <source>
        <dbReference type="SAM" id="MobiDB-lite"/>
    </source>
</evidence>
<evidence type="ECO:0000269" key="11">
    <source>
    </source>
</evidence>
<evidence type="ECO:0000305" key="12"/>
<evidence type="ECO:0007829" key="13">
    <source>
        <dbReference type="PDB" id="1OE9"/>
    </source>
</evidence>
<evidence type="ECO:0007829" key="14">
    <source>
        <dbReference type="PDB" id="1W7I"/>
    </source>
</evidence>
<evidence type="ECO:0007829" key="15">
    <source>
        <dbReference type="PDB" id="1W7J"/>
    </source>
</evidence>
<evidence type="ECO:0007829" key="16">
    <source>
        <dbReference type="PDB" id="1W8J"/>
    </source>
</evidence>
<evidence type="ECO:0007829" key="17">
    <source>
        <dbReference type="PDB" id="7PLU"/>
    </source>
</evidence>
<evidence type="ECO:0007829" key="18">
    <source>
        <dbReference type="PDB" id="7PLY"/>
    </source>
</evidence>
<evidence type="ECO:0007829" key="19">
    <source>
        <dbReference type="PDB" id="7PM8"/>
    </source>
</evidence>
<evidence type="ECO:0007829" key="20">
    <source>
        <dbReference type="PDB" id="7PMD"/>
    </source>
</evidence>
<evidence type="ECO:0007829" key="21">
    <source>
        <dbReference type="PDB" id="7PMG"/>
    </source>
</evidence>
<evidence type="ECO:0007829" key="22">
    <source>
        <dbReference type="PDB" id="7PMH"/>
    </source>
</evidence>
<evidence type="ECO:0007829" key="23">
    <source>
        <dbReference type="PDB" id="7PMJ"/>
    </source>
</evidence>
<dbReference type="EMBL" id="X67251">
    <property type="protein sequence ID" value="CAA47673.1"/>
    <property type="molecule type" value="mRNA"/>
</dbReference>
<dbReference type="EMBL" id="Z11718">
    <property type="protein sequence ID" value="CAA77782.1"/>
    <property type="molecule type" value="mRNA"/>
</dbReference>
<dbReference type="PIR" id="S19188">
    <property type="entry name" value="S19188"/>
</dbReference>
<dbReference type="RefSeq" id="NP_990631.1">
    <property type="nucleotide sequence ID" value="NM_205300.2"/>
</dbReference>
<dbReference type="PDB" id="1OE9">
    <property type="method" value="X-ray"/>
    <property type="resolution" value="2.05 A"/>
    <property type="chains" value="A=1-792"/>
</dbReference>
<dbReference type="PDB" id="1W7I">
    <property type="method" value="X-ray"/>
    <property type="resolution" value="3.00 A"/>
    <property type="chains" value="A=1-792"/>
</dbReference>
<dbReference type="PDB" id="1W7J">
    <property type="method" value="X-ray"/>
    <property type="resolution" value="2.00 A"/>
    <property type="chains" value="A=1-792"/>
</dbReference>
<dbReference type="PDB" id="1W8J">
    <property type="method" value="X-ray"/>
    <property type="resolution" value="2.70 A"/>
    <property type="chains" value="A/B/C/D=1-766"/>
</dbReference>
<dbReference type="PDB" id="2DFS">
    <property type="method" value="EM"/>
    <property type="resolution" value="24.00 A"/>
    <property type="chains" value="A/M=1-1080"/>
</dbReference>
<dbReference type="PDB" id="7PLT">
    <property type="method" value="EM"/>
    <property type="resolution" value="3.30 A"/>
    <property type="chains" value="A=1-792"/>
</dbReference>
<dbReference type="PDB" id="7PLU">
    <property type="method" value="EM"/>
    <property type="resolution" value="3.20 A"/>
    <property type="chains" value="A/D=1-792"/>
</dbReference>
<dbReference type="PDB" id="7PLV">
    <property type="method" value="EM"/>
    <property type="resolution" value="3.50 A"/>
    <property type="chains" value="A=1-792"/>
</dbReference>
<dbReference type="PDB" id="7PLW">
    <property type="method" value="EM"/>
    <property type="resolution" value="3.50 A"/>
    <property type="chains" value="A=1-792"/>
</dbReference>
<dbReference type="PDB" id="7PLX">
    <property type="method" value="EM"/>
    <property type="resolution" value="3.60 A"/>
    <property type="chains" value="A=1-792"/>
</dbReference>
<dbReference type="PDB" id="7PLY">
    <property type="method" value="EM"/>
    <property type="resolution" value="3.20 A"/>
    <property type="chains" value="A=1-792"/>
</dbReference>
<dbReference type="PDB" id="7PLZ">
    <property type="method" value="EM"/>
    <property type="resolution" value="3.20 A"/>
    <property type="chains" value="A/D=1-792"/>
</dbReference>
<dbReference type="PDB" id="7PM0">
    <property type="method" value="EM"/>
    <property type="resolution" value="3.60 A"/>
    <property type="chains" value="A=1-792"/>
</dbReference>
<dbReference type="PDB" id="7PM1">
    <property type="method" value="EM"/>
    <property type="resolution" value="3.50 A"/>
    <property type="chains" value="A=1-792"/>
</dbReference>
<dbReference type="PDB" id="7PM2">
    <property type="method" value="EM"/>
    <property type="resolution" value="3.60 A"/>
    <property type="chains" value="A=1-792"/>
</dbReference>
<dbReference type="PDB" id="7PM5">
    <property type="method" value="EM"/>
    <property type="resolution" value="3.10 A"/>
    <property type="chains" value="A=1-792"/>
</dbReference>
<dbReference type="PDB" id="7PM6">
    <property type="method" value="EM"/>
    <property type="resolution" value="3.00 A"/>
    <property type="chains" value="A/D=1-792"/>
</dbReference>
<dbReference type="PDB" id="7PM7">
    <property type="method" value="EM"/>
    <property type="resolution" value="3.50 A"/>
    <property type="chains" value="A=1-792"/>
</dbReference>
<dbReference type="PDB" id="7PM8">
    <property type="method" value="EM"/>
    <property type="resolution" value="3.50 A"/>
    <property type="chains" value="A=1-792"/>
</dbReference>
<dbReference type="PDB" id="7PM9">
    <property type="method" value="EM"/>
    <property type="resolution" value="3.70 A"/>
    <property type="chains" value="A=1-792"/>
</dbReference>
<dbReference type="PDB" id="7PMA">
    <property type="method" value="EM"/>
    <property type="resolution" value="3.60 A"/>
    <property type="chains" value="A=1-792"/>
</dbReference>
<dbReference type="PDB" id="7PMB">
    <property type="method" value="EM"/>
    <property type="resolution" value="3.60 A"/>
    <property type="chains" value="A=1-792"/>
</dbReference>
<dbReference type="PDB" id="7PMC">
    <property type="method" value="EM"/>
    <property type="resolution" value="3.70 A"/>
    <property type="chains" value="A=1-792"/>
</dbReference>
<dbReference type="PDB" id="7PMD">
    <property type="method" value="EM"/>
    <property type="resolution" value="2.90 A"/>
    <property type="chains" value="A=1-792"/>
</dbReference>
<dbReference type="PDB" id="7PME">
    <property type="method" value="EM"/>
    <property type="resolution" value="2.90 A"/>
    <property type="chains" value="A/D=1-792"/>
</dbReference>
<dbReference type="PDB" id="7PMF">
    <property type="method" value="EM"/>
    <property type="resolution" value="3.40 A"/>
    <property type="chains" value="A=1-792"/>
</dbReference>
<dbReference type="PDB" id="7PMG">
    <property type="method" value="EM"/>
    <property type="resolution" value="3.30 A"/>
    <property type="chains" value="A=1-792"/>
</dbReference>
<dbReference type="PDB" id="7PMH">
    <property type="method" value="EM"/>
    <property type="resolution" value="3.40 A"/>
    <property type="chains" value="A=1-792"/>
</dbReference>
<dbReference type="PDB" id="7PMI">
    <property type="method" value="EM"/>
    <property type="resolution" value="3.30 A"/>
    <property type="chains" value="A=1-792"/>
</dbReference>
<dbReference type="PDB" id="7PMJ">
    <property type="method" value="EM"/>
    <property type="resolution" value="3.40 A"/>
    <property type="chains" value="A=1-792"/>
</dbReference>
<dbReference type="PDB" id="7PML">
    <property type="method" value="EM"/>
    <property type="resolution" value="3.30 A"/>
    <property type="chains" value="A=1-792"/>
</dbReference>
<dbReference type="PDBsum" id="1OE9"/>
<dbReference type="PDBsum" id="1W7I"/>
<dbReference type="PDBsum" id="1W7J"/>
<dbReference type="PDBsum" id="1W8J"/>
<dbReference type="PDBsum" id="2DFS"/>
<dbReference type="PDBsum" id="7PLT"/>
<dbReference type="PDBsum" id="7PLU"/>
<dbReference type="PDBsum" id="7PLV"/>
<dbReference type="PDBsum" id="7PLW"/>
<dbReference type="PDBsum" id="7PLX"/>
<dbReference type="PDBsum" id="7PLY"/>
<dbReference type="PDBsum" id="7PLZ"/>
<dbReference type="PDBsum" id="7PM0"/>
<dbReference type="PDBsum" id="7PM1"/>
<dbReference type="PDBsum" id="7PM2"/>
<dbReference type="PDBsum" id="7PM5"/>
<dbReference type="PDBsum" id="7PM6"/>
<dbReference type="PDBsum" id="7PM7"/>
<dbReference type="PDBsum" id="7PM8"/>
<dbReference type="PDBsum" id="7PM9"/>
<dbReference type="PDBsum" id="7PMA"/>
<dbReference type="PDBsum" id="7PMB"/>
<dbReference type="PDBsum" id="7PMC"/>
<dbReference type="PDBsum" id="7PMD"/>
<dbReference type="PDBsum" id="7PME"/>
<dbReference type="PDBsum" id="7PMF"/>
<dbReference type="PDBsum" id="7PMG"/>
<dbReference type="PDBsum" id="7PMH"/>
<dbReference type="PDBsum" id="7PMI"/>
<dbReference type="PDBsum" id="7PMJ"/>
<dbReference type="PDBsum" id="7PML"/>
<dbReference type="EMDB" id="EMD-1201"/>
<dbReference type="EMDB" id="EMD-13501"/>
<dbReference type="EMDB" id="EMD-13502"/>
<dbReference type="EMDB" id="EMD-13503"/>
<dbReference type="EMDB" id="EMD-13504"/>
<dbReference type="EMDB" id="EMD-13505"/>
<dbReference type="EMDB" id="EMD-13506"/>
<dbReference type="EMDB" id="EMD-13507"/>
<dbReference type="EMDB" id="EMD-13508"/>
<dbReference type="EMDB" id="EMD-13509"/>
<dbReference type="EMDB" id="EMD-13510"/>
<dbReference type="EMDB" id="EMD-13521"/>
<dbReference type="EMDB" id="EMD-13522"/>
<dbReference type="EMDB" id="EMD-13523"/>
<dbReference type="EMDB" id="EMD-13524"/>
<dbReference type="EMDB" id="EMD-13525"/>
<dbReference type="EMDB" id="EMD-13526"/>
<dbReference type="EMDB" id="EMD-13527"/>
<dbReference type="EMDB" id="EMD-13528"/>
<dbReference type="EMDB" id="EMD-13529"/>
<dbReference type="EMDB" id="EMD-13530"/>
<dbReference type="EMDB" id="EMD-13531"/>
<dbReference type="EMDB" id="EMD-13532"/>
<dbReference type="EMDB" id="EMD-13533"/>
<dbReference type="EMDB" id="EMD-13535"/>
<dbReference type="EMDB" id="EMD-13536"/>
<dbReference type="EMDB" id="EMD-13538"/>
<dbReference type="SMR" id="Q02440"/>
<dbReference type="FunCoup" id="Q02440">
    <property type="interactions" value="871"/>
</dbReference>
<dbReference type="IntAct" id="Q02440">
    <property type="interactions" value="1"/>
</dbReference>
<dbReference type="STRING" id="9031.ENSGALP00000049670"/>
<dbReference type="BindingDB" id="Q02440"/>
<dbReference type="ChEMBL" id="CHEMBL1781866"/>
<dbReference type="GlyGen" id="Q02440">
    <property type="glycosylation" value="2 sites"/>
</dbReference>
<dbReference type="PaxDb" id="9031-ENSGALP00000038276"/>
<dbReference type="Ensembl" id="ENSGALT00010050646.1">
    <property type="protein sequence ID" value="ENSGALP00010029900.1"/>
    <property type="gene ID" value="ENSGALG00010020944.1"/>
</dbReference>
<dbReference type="GeneID" id="396237"/>
<dbReference type="KEGG" id="gga:396237"/>
<dbReference type="CTD" id="4644"/>
<dbReference type="VEuPathDB" id="HostDB:geneid_396237"/>
<dbReference type="eggNOG" id="KOG0160">
    <property type="taxonomic scope" value="Eukaryota"/>
</dbReference>
<dbReference type="GeneTree" id="ENSGT00940000155347"/>
<dbReference type="InParanoid" id="Q02440"/>
<dbReference type="OrthoDB" id="6108017at2759"/>
<dbReference type="PhylomeDB" id="Q02440"/>
<dbReference type="EvolutionaryTrace" id="Q02440"/>
<dbReference type="PRO" id="PR:Q02440"/>
<dbReference type="Proteomes" id="UP000000539">
    <property type="component" value="Chromosome 10"/>
</dbReference>
<dbReference type="GO" id="GO:0015629">
    <property type="term" value="C:actin cytoskeleton"/>
    <property type="evidence" value="ECO:0000318"/>
    <property type="project" value="GO_Central"/>
</dbReference>
<dbReference type="GO" id="GO:0005737">
    <property type="term" value="C:cytoplasm"/>
    <property type="evidence" value="ECO:0000318"/>
    <property type="project" value="GO_Central"/>
</dbReference>
<dbReference type="GO" id="GO:0031941">
    <property type="term" value="C:filamentous actin"/>
    <property type="evidence" value="ECO:0000314"/>
    <property type="project" value="UniProtKB"/>
</dbReference>
<dbReference type="GO" id="GO:0000139">
    <property type="term" value="C:Golgi membrane"/>
    <property type="evidence" value="ECO:0007669"/>
    <property type="project" value="UniProtKB-SubCell"/>
</dbReference>
<dbReference type="GO" id="GO:0032593">
    <property type="term" value="C:insulin-responsive compartment"/>
    <property type="evidence" value="ECO:0000250"/>
    <property type="project" value="UniProtKB"/>
</dbReference>
<dbReference type="GO" id="GO:0016020">
    <property type="term" value="C:membrane"/>
    <property type="evidence" value="ECO:0000318"/>
    <property type="project" value="GO_Central"/>
</dbReference>
<dbReference type="GO" id="GO:0016459">
    <property type="term" value="C:myosin complex"/>
    <property type="evidence" value="ECO:0007669"/>
    <property type="project" value="UniProtKB-KW"/>
</dbReference>
<dbReference type="GO" id="GO:0051015">
    <property type="term" value="F:actin filament binding"/>
    <property type="evidence" value="ECO:0000318"/>
    <property type="project" value="GO_Central"/>
</dbReference>
<dbReference type="GO" id="GO:0005524">
    <property type="term" value="F:ATP binding"/>
    <property type="evidence" value="ECO:0007669"/>
    <property type="project" value="UniProtKB-KW"/>
</dbReference>
<dbReference type="GO" id="GO:0016887">
    <property type="term" value="F:ATP hydrolysis activity"/>
    <property type="evidence" value="ECO:0000250"/>
    <property type="project" value="UniProtKB"/>
</dbReference>
<dbReference type="GO" id="GO:0005516">
    <property type="term" value="F:calmodulin binding"/>
    <property type="evidence" value="ECO:0000303"/>
    <property type="project" value="UniProtKB"/>
</dbReference>
<dbReference type="GO" id="GO:0000146">
    <property type="term" value="F:microfilament motor activity"/>
    <property type="evidence" value="ECO:0000314"/>
    <property type="project" value="UniProtKB"/>
</dbReference>
<dbReference type="GO" id="GO:0060001">
    <property type="term" value="F:minus-end directed microfilament motor activity"/>
    <property type="evidence" value="ECO:0000314"/>
    <property type="project" value="UniProtKB"/>
</dbReference>
<dbReference type="GO" id="GO:0007015">
    <property type="term" value="P:actin filament organization"/>
    <property type="evidence" value="ECO:0000318"/>
    <property type="project" value="GO_Central"/>
</dbReference>
<dbReference type="GO" id="GO:0032869">
    <property type="term" value="P:cellular response to insulin stimulus"/>
    <property type="evidence" value="ECO:0000250"/>
    <property type="project" value="UniProtKB"/>
</dbReference>
<dbReference type="GO" id="GO:0072659">
    <property type="term" value="P:protein localization to plasma membrane"/>
    <property type="evidence" value="ECO:0000250"/>
    <property type="project" value="UniProtKB"/>
</dbReference>
<dbReference type="GO" id="GO:0016192">
    <property type="term" value="P:vesicle-mediated transport"/>
    <property type="evidence" value="ECO:0000250"/>
    <property type="project" value="UniProtKB"/>
</dbReference>
<dbReference type="CDD" id="cd15478">
    <property type="entry name" value="Myo5a_CBD"/>
    <property type="match status" value="1"/>
</dbReference>
<dbReference type="CDD" id="cd01380">
    <property type="entry name" value="MYSc_Myo5"/>
    <property type="match status" value="1"/>
</dbReference>
<dbReference type="FunFam" id="1.20.58.530:FF:000002">
    <property type="entry name" value="Class V myosin"/>
    <property type="match status" value="1"/>
</dbReference>
<dbReference type="FunFam" id="1.10.10.820:FF:000001">
    <property type="entry name" value="Myosin heavy chain"/>
    <property type="match status" value="1"/>
</dbReference>
<dbReference type="FunFam" id="1.20.5.190:FF:000006">
    <property type="entry name" value="Myosin VA"/>
    <property type="match status" value="1"/>
</dbReference>
<dbReference type="FunFam" id="3.40.850.10:FF:000089">
    <property type="entry name" value="Myosin VC"/>
    <property type="match status" value="1"/>
</dbReference>
<dbReference type="FunFam" id="3.30.70.1590:FF:000003">
    <property type="entry name" value="Myosin-Va isoform 1"/>
    <property type="match status" value="1"/>
</dbReference>
<dbReference type="FunFam" id="1.20.5.190:FF:000001">
    <property type="entry name" value="unconventional myosin-Va"/>
    <property type="match status" value="2"/>
</dbReference>
<dbReference type="Gene3D" id="1.10.10.820">
    <property type="match status" value="1"/>
</dbReference>
<dbReference type="Gene3D" id="1.20.5.190">
    <property type="match status" value="3"/>
</dbReference>
<dbReference type="Gene3D" id="1.20.58.530">
    <property type="match status" value="1"/>
</dbReference>
<dbReference type="Gene3D" id="3.30.70.1590">
    <property type="match status" value="1"/>
</dbReference>
<dbReference type="Gene3D" id="3.40.850.10">
    <property type="entry name" value="Kinesin motor domain"/>
    <property type="match status" value="1"/>
</dbReference>
<dbReference type="Gene3D" id="1.20.120.720">
    <property type="entry name" value="Myosin VI head, motor domain, U50 subdomain"/>
    <property type="match status" value="1"/>
</dbReference>
<dbReference type="InterPro" id="IPR002710">
    <property type="entry name" value="Dilute_dom"/>
</dbReference>
<dbReference type="InterPro" id="IPR000048">
    <property type="entry name" value="IQ_motif_EF-hand-BS"/>
</dbReference>
<dbReference type="InterPro" id="IPR036961">
    <property type="entry name" value="Kinesin_motor_dom_sf"/>
</dbReference>
<dbReference type="InterPro" id="IPR037988">
    <property type="entry name" value="Myo5a_CBD"/>
</dbReference>
<dbReference type="InterPro" id="IPR001609">
    <property type="entry name" value="Myosin_head_motor_dom-like"/>
</dbReference>
<dbReference type="InterPro" id="IPR004009">
    <property type="entry name" value="Myosin_N"/>
</dbReference>
<dbReference type="InterPro" id="IPR036103">
    <property type="entry name" value="MYSc_Myo5"/>
</dbReference>
<dbReference type="InterPro" id="IPR027417">
    <property type="entry name" value="P-loop_NTPase"/>
</dbReference>
<dbReference type="PANTHER" id="PTHR13140">
    <property type="entry name" value="MYOSIN"/>
    <property type="match status" value="1"/>
</dbReference>
<dbReference type="PANTHER" id="PTHR13140:SF273">
    <property type="entry name" value="UNCONVENTIONAL MYOSIN-VA"/>
    <property type="match status" value="1"/>
</dbReference>
<dbReference type="Pfam" id="PF01843">
    <property type="entry name" value="DIL"/>
    <property type="match status" value="1"/>
</dbReference>
<dbReference type="Pfam" id="PF00612">
    <property type="entry name" value="IQ"/>
    <property type="match status" value="6"/>
</dbReference>
<dbReference type="Pfam" id="PF00063">
    <property type="entry name" value="Myosin_head"/>
    <property type="match status" value="1"/>
</dbReference>
<dbReference type="PRINTS" id="PR00193">
    <property type="entry name" value="MYOSINHEAVY"/>
</dbReference>
<dbReference type="SMART" id="SM01132">
    <property type="entry name" value="DIL"/>
    <property type="match status" value="1"/>
</dbReference>
<dbReference type="SMART" id="SM00015">
    <property type="entry name" value="IQ"/>
    <property type="match status" value="6"/>
</dbReference>
<dbReference type="SMART" id="SM00242">
    <property type="entry name" value="MYSc"/>
    <property type="match status" value="1"/>
</dbReference>
<dbReference type="SUPFAM" id="SSF52540">
    <property type="entry name" value="P-loop containing nucleoside triphosphate hydrolases"/>
    <property type="match status" value="3"/>
</dbReference>
<dbReference type="PROSITE" id="PS51126">
    <property type="entry name" value="DILUTE"/>
    <property type="match status" value="1"/>
</dbReference>
<dbReference type="PROSITE" id="PS50096">
    <property type="entry name" value="IQ"/>
    <property type="match status" value="6"/>
</dbReference>
<dbReference type="PROSITE" id="PS51456">
    <property type="entry name" value="MYOSIN_MOTOR"/>
    <property type="match status" value="1"/>
</dbReference>
<dbReference type="PROSITE" id="PS51844">
    <property type="entry name" value="SH3_LIKE"/>
    <property type="match status" value="1"/>
</dbReference>
<protein>
    <recommendedName>
        <fullName>Unconventional myosin-Va</fullName>
    </recommendedName>
    <alternativeName>
        <fullName>Dilute myosin heavy chain, non-muscle</fullName>
    </alternativeName>
    <alternativeName>
        <fullName>Myosin heavy chain p190</fullName>
    </alternativeName>
    <alternativeName>
        <fullName>Myosin-V</fullName>
    </alternativeName>
</protein>
<proteinExistence type="evidence at protein level"/>
<reference key="1">
    <citation type="journal article" date="1992" name="FEBS Lett.">
        <title>cDNA encoding the chicken ortholog of the mouse dilute gene product. Sequence comparison reveals a myosin I subfamily with conserved C-terminal domains.</title>
        <authorList>
            <person name="Sanders G."/>
            <person name="Lichte B."/>
            <person name="Meyer H.E."/>
            <person name="Kilimann M.W."/>
        </authorList>
    </citation>
    <scope>NUCLEOTIDE SEQUENCE [MRNA]</scope>
    <scope>TISSUE SPECIFICITY</scope>
    <source>
        <tissue>Brain</tissue>
    </source>
</reference>
<reference key="2">
    <citation type="journal article" date="1992" name="J. Cell Biol.">
        <title>Primary structure and cellular localization of chicken brain myosin-V (p190), an unconventional myosin with calmodulin light chains.</title>
        <authorList>
            <person name="Espreafico E.M."/>
            <person name="Cheney R.E."/>
            <person name="Matteoli M."/>
            <person name="Nascimento A.A."/>
            <person name="de Camilli P.V."/>
            <person name="Larson R.E."/>
            <person name="Mooseker M.S."/>
        </authorList>
    </citation>
    <scope>NUCLEOTIDE SEQUENCE [MRNA]</scope>
    <scope>PROTEIN SEQUENCE OF 1154-1163</scope>
    <source>
        <tissue>Brain</tissue>
    </source>
</reference>
<feature type="chain" id="PRO_0000123459" description="Unconventional myosin-Va">
    <location>
        <begin position="1"/>
        <end position="1829"/>
    </location>
</feature>
<feature type="domain" description="Myosin N-terminal SH3-like" evidence="9">
    <location>
        <begin position="8"/>
        <end position="60"/>
    </location>
</feature>
<feature type="domain" description="Myosin motor" evidence="8">
    <location>
        <begin position="69"/>
        <end position="764"/>
    </location>
</feature>
<feature type="domain" description="IQ 1" evidence="6">
    <location>
        <begin position="767"/>
        <end position="789"/>
    </location>
</feature>
<feature type="domain" description="IQ 2" evidence="6">
    <location>
        <begin position="790"/>
        <end position="814"/>
    </location>
</feature>
<feature type="domain" description="IQ 3" evidence="6">
    <location>
        <begin position="815"/>
        <end position="837"/>
    </location>
</feature>
<feature type="domain" description="IQ 4" evidence="6">
    <location>
        <begin position="838"/>
        <end position="862"/>
    </location>
</feature>
<feature type="domain" description="IQ 5" evidence="6">
    <location>
        <begin position="863"/>
        <end position="887"/>
    </location>
</feature>
<feature type="domain" description="IQ 6" evidence="6">
    <location>
        <begin position="888"/>
        <end position="915"/>
    </location>
</feature>
<feature type="domain" description="Dilute" evidence="7">
    <location>
        <begin position="1508"/>
        <end position="1784"/>
    </location>
</feature>
<feature type="region of interest" description="Disordered" evidence="10">
    <location>
        <begin position="599"/>
        <end position="635"/>
    </location>
</feature>
<feature type="region of interest" description="Actin-binding" evidence="5">
    <location>
        <begin position="644"/>
        <end position="666"/>
    </location>
</feature>
<feature type="region of interest" description="Disordered" evidence="10">
    <location>
        <begin position="1106"/>
        <end position="1148"/>
    </location>
</feature>
<feature type="region of interest" description="Disordered" evidence="10">
    <location>
        <begin position="1170"/>
        <end position="1199"/>
    </location>
</feature>
<feature type="coiled-coil region" evidence="5">
    <location>
        <begin position="916"/>
        <end position="1239"/>
    </location>
</feature>
<feature type="coiled-coil region" evidence="5">
    <location>
        <begin position="1315"/>
        <end position="1419"/>
    </location>
</feature>
<feature type="compositionally biased region" description="Polar residues" evidence="10">
    <location>
        <begin position="1117"/>
        <end position="1131"/>
    </location>
</feature>
<feature type="compositionally biased region" description="Basic and acidic residues" evidence="10">
    <location>
        <begin position="1137"/>
        <end position="1148"/>
    </location>
</feature>
<feature type="compositionally biased region" description="Basic and acidic residues" evidence="10">
    <location>
        <begin position="1170"/>
        <end position="1196"/>
    </location>
</feature>
<feature type="binding site" evidence="1">
    <location>
        <begin position="163"/>
        <end position="170"/>
    </location>
    <ligand>
        <name>ATP</name>
        <dbReference type="ChEBI" id="CHEBI:30616"/>
    </ligand>
</feature>
<feature type="modified residue" description="Phosphothreonine" evidence="5">
    <location>
        <position position="1734"/>
    </location>
</feature>
<feature type="sequence conflict" description="In Ref. 2; CAA77782." evidence="12" ref="2">
    <original>E</original>
    <variation>EQ</variation>
    <location>
        <position position="1142"/>
    </location>
</feature>
<feature type="helix" evidence="15">
    <location>
        <begin position="4"/>
        <end position="6"/>
    </location>
</feature>
<feature type="strand" evidence="23">
    <location>
        <begin position="8"/>
        <end position="10"/>
    </location>
</feature>
<feature type="strand" evidence="15">
    <location>
        <begin position="12"/>
        <end position="17"/>
    </location>
</feature>
<feature type="turn" evidence="15">
    <location>
        <begin position="18"/>
        <end position="20"/>
    </location>
</feature>
<feature type="strand" evidence="15">
    <location>
        <begin position="21"/>
        <end position="29"/>
    </location>
</feature>
<feature type="strand" evidence="15">
    <location>
        <begin position="36"/>
        <end position="41"/>
    </location>
</feature>
<feature type="strand" evidence="15">
    <location>
        <begin position="43"/>
        <end position="51"/>
    </location>
</feature>
<feature type="turn" evidence="15">
    <location>
        <begin position="54"/>
        <end position="57"/>
    </location>
</feature>
<feature type="helix" evidence="15">
    <location>
        <begin position="66"/>
        <end position="68"/>
    </location>
</feature>
<feature type="strand" evidence="15">
    <location>
        <begin position="72"/>
        <end position="74"/>
    </location>
</feature>
<feature type="strand" evidence="18">
    <location>
        <begin position="77"/>
        <end position="79"/>
    </location>
</feature>
<feature type="helix" evidence="15">
    <location>
        <begin position="82"/>
        <end position="96"/>
    </location>
</feature>
<feature type="strand" evidence="15">
    <location>
        <begin position="100"/>
        <end position="103"/>
    </location>
</feature>
<feature type="strand" evidence="15">
    <location>
        <begin position="106"/>
        <end position="110"/>
    </location>
</feature>
<feature type="helix" evidence="20">
    <location>
        <begin position="117"/>
        <end position="119"/>
    </location>
</feature>
<feature type="helix" evidence="15">
    <location>
        <begin position="121"/>
        <end position="127"/>
    </location>
</feature>
<feature type="helix" evidence="15">
    <location>
        <begin position="132"/>
        <end position="134"/>
    </location>
</feature>
<feature type="helix" evidence="15">
    <location>
        <begin position="139"/>
        <end position="153"/>
    </location>
</feature>
<feature type="strand" evidence="15">
    <location>
        <begin position="157"/>
        <end position="162"/>
    </location>
</feature>
<feature type="helix" evidence="17">
    <location>
        <begin position="165"/>
        <end position="167"/>
    </location>
</feature>
<feature type="helix" evidence="15">
    <location>
        <begin position="169"/>
        <end position="183"/>
    </location>
</feature>
<feature type="strand" evidence="15">
    <location>
        <begin position="187"/>
        <end position="190"/>
    </location>
</feature>
<feature type="helix" evidence="15">
    <location>
        <begin position="192"/>
        <end position="207"/>
    </location>
</feature>
<feature type="strand" evidence="13">
    <location>
        <begin position="208"/>
        <end position="211"/>
    </location>
</feature>
<feature type="strand" evidence="13">
    <location>
        <begin position="214"/>
        <end position="218"/>
    </location>
</feature>
<feature type="strand" evidence="15">
    <location>
        <begin position="220"/>
        <end position="228"/>
    </location>
</feature>
<feature type="strand" evidence="19">
    <location>
        <begin position="230"/>
        <end position="232"/>
    </location>
</feature>
<feature type="strand" evidence="15">
    <location>
        <begin position="234"/>
        <end position="242"/>
    </location>
</feature>
<feature type="helix" evidence="15">
    <location>
        <begin position="246"/>
        <end position="249"/>
    </location>
</feature>
<feature type="helix" evidence="15">
    <location>
        <begin position="260"/>
        <end position="267"/>
    </location>
</feature>
<feature type="turn" evidence="15">
    <location>
        <begin position="268"/>
        <end position="270"/>
    </location>
</feature>
<feature type="helix" evidence="15">
    <location>
        <begin position="272"/>
        <end position="277"/>
    </location>
</feature>
<feature type="turn" evidence="15">
    <location>
        <begin position="282"/>
        <end position="284"/>
    </location>
</feature>
<feature type="helix" evidence="15">
    <location>
        <begin position="286"/>
        <end position="289"/>
    </location>
</feature>
<feature type="helix" evidence="15">
    <location>
        <begin position="301"/>
        <end position="314"/>
    </location>
</feature>
<feature type="helix" evidence="15">
    <location>
        <begin position="319"/>
        <end position="336"/>
    </location>
</feature>
<feature type="strand" evidence="15">
    <location>
        <begin position="341"/>
        <end position="344"/>
    </location>
</feature>
<feature type="strand" evidence="15">
    <location>
        <begin position="347"/>
        <end position="349"/>
    </location>
</feature>
<feature type="helix" evidence="15">
    <location>
        <begin position="355"/>
        <end position="364"/>
    </location>
</feature>
<feature type="helix" evidence="15">
    <location>
        <begin position="368"/>
        <end position="375"/>
    </location>
</feature>
<feature type="strand" evidence="15">
    <location>
        <begin position="376"/>
        <end position="381"/>
    </location>
</feature>
<feature type="strand" evidence="15">
    <location>
        <begin position="386"/>
        <end position="390"/>
    </location>
</feature>
<feature type="helix" evidence="15">
    <location>
        <begin position="393"/>
        <end position="423"/>
    </location>
</feature>
<feature type="strand" evidence="15">
    <location>
        <begin position="430"/>
        <end position="437"/>
    </location>
</feature>
<feature type="strand" evidence="13">
    <location>
        <begin position="445"/>
        <end position="447"/>
    </location>
</feature>
<feature type="helix" evidence="15">
    <location>
        <begin position="449"/>
        <end position="479"/>
    </location>
</feature>
<feature type="helix" evidence="15">
    <location>
        <begin position="484"/>
        <end position="486"/>
    </location>
</feature>
<feature type="helix" evidence="15">
    <location>
        <begin position="493"/>
        <end position="500"/>
    </location>
</feature>
<feature type="strand" evidence="22">
    <location>
        <begin position="501"/>
        <end position="504"/>
    </location>
</feature>
<feature type="helix" evidence="15">
    <location>
        <begin position="505"/>
        <end position="513"/>
    </location>
</feature>
<feature type="strand" evidence="14">
    <location>
        <begin position="515"/>
        <end position="517"/>
    </location>
</feature>
<feature type="helix" evidence="15">
    <location>
        <begin position="520"/>
        <end position="531"/>
    </location>
</feature>
<feature type="turn" evidence="15">
    <location>
        <begin position="532"/>
        <end position="534"/>
    </location>
</feature>
<feature type="strand" evidence="20">
    <location>
        <begin position="536"/>
        <end position="539"/>
    </location>
</feature>
<feature type="strand" evidence="15">
    <location>
        <begin position="545"/>
        <end position="551"/>
    </location>
</feature>
<feature type="strand" evidence="15">
    <location>
        <begin position="556"/>
        <end position="560"/>
    </location>
</feature>
<feature type="helix" evidence="15">
    <location>
        <begin position="564"/>
        <end position="569"/>
    </location>
</feature>
<feature type="helix" evidence="15">
    <location>
        <begin position="574"/>
        <end position="581"/>
    </location>
</feature>
<feature type="strand" evidence="21">
    <location>
        <begin position="585"/>
        <end position="587"/>
    </location>
</feature>
<feature type="helix" evidence="15">
    <location>
        <begin position="588"/>
        <end position="591"/>
    </location>
</feature>
<feature type="turn" evidence="16">
    <location>
        <begin position="629"/>
        <end position="633"/>
    </location>
</feature>
<feature type="helix" evidence="15">
    <location>
        <begin position="636"/>
        <end position="652"/>
    </location>
</feature>
<feature type="strand" evidence="15">
    <location>
        <begin position="654"/>
        <end position="662"/>
    </location>
</feature>
<feature type="helix" evidence="15">
    <location>
        <begin position="675"/>
        <end position="684"/>
    </location>
</feature>
<feature type="helix" evidence="15">
    <location>
        <begin position="687"/>
        <end position="696"/>
    </location>
</feature>
<feature type="strand" evidence="15">
    <location>
        <begin position="700"/>
        <end position="703"/>
    </location>
</feature>
<feature type="helix" evidence="15">
    <location>
        <begin position="704"/>
        <end position="711"/>
    </location>
</feature>
<feature type="helix" evidence="15">
    <location>
        <begin position="712"/>
        <end position="714"/>
    </location>
</feature>
<feature type="helix" evidence="15">
    <location>
        <begin position="717"/>
        <end position="719"/>
    </location>
</feature>
<feature type="helix" evidence="15">
    <location>
        <begin position="724"/>
        <end position="735"/>
    </location>
</feature>
<feature type="helix" evidence="15">
    <location>
        <begin position="739"/>
        <end position="741"/>
    </location>
</feature>
<feature type="strand" evidence="15">
    <location>
        <begin position="742"/>
        <end position="744"/>
    </location>
</feature>
<feature type="strand" evidence="15">
    <location>
        <begin position="746"/>
        <end position="751"/>
    </location>
</feature>
<feature type="helix" evidence="15">
    <location>
        <begin position="755"/>
        <end position="791"/>
    </location>
</feature>
<keyword id="KW-0002">3D-structure</keyword>
<keyword id="KW-0009">Actin-binding</keyword>
<keyword id="KW-0067">ATP-binding</keyword>
<keyword id="KW-0112">Calmodulin-binding</keyword>
<keyword id="KW-0175">Coiled coil</keyword>
<keyword id="KW-0903">Direct protein sequencing</keyword>
<keyword id="KW-0333">Golgi apparatus</keyword>
<keyword id="KW-0472">Membrane</keyword>
<keyword id="KW-0505">Motor protein</keyword>
<keyword id="KW-0518">Myosin</keyword>
<keyword id="KW-0547">Nucleotide-binding</keyword>
<keyword id="KW-0597">Phosphoprotein</keyword>
<keyword id="KW-1185">Reference proteome</keyword>
<keyword id="KW-0677">Repeat</keyword>
<gene>
    <name type="primary">MYO5A</name>
</gene>
<organism>
    <name type="scientific">Gallus gallus</name>
    <name type="common">Chicken</name>
    <dbReference type="NCBI Taxonomy" id="9031"/>
    <lineage>
        <taxon>Eukaryota</taxon>
        <taxon>Metazoa</taxon>
        <taxon>Chordata</taxon>
        <taxon>Craniata</taxon>
        <taxon>Vertebrata</taxon>
        <taxon>Euteleostomi</taxon>
        <taxon>Archelosauria</taxon>
        <taxon>Archosauria</taxon>
        <taxon>Dinosauria</taxon>
        <taxon>Saurischia</taxon>
        <taxon>Theropoda</taxon>
        <taxon>Coelurosauria</taxon>
        <taxon>Aves</taxon>
        <taxon>Neognathae</taxon>
        <taxon>Galloanserae</taxon>
        <taxon>Galliformes</taxon>
        <taxon>Phasianidae</taxon>
        <taxon>Phasianinae</taxon>
        <taxon>Gallus</taxon>
    </lineage>
</organism>
<comment type="function">
    <text evidence="2 3 4">Processive actin-based motor that can move in large steps approximating the 36-nm pseudo-repeat of the actin filament. Can hydrolyze ATP in the presence of actin, which is essential for its function as a motor protein. Involved in melanosome transport. Also mediates the transport of vesicles to the plasma membrane. May also be required for some polarization process involved in dendrite formation.</text>
</comment>
<comment type="catalytic activity">
    <reaction evidence="4">
        <text>ATP + H2O = ADP + phosphate + H(+)</text>
        <dbReference type="Rhea" id="RHEA:13065"/>
        <dbReference type="ChEBI" id="CHEBI:15377"/>
        <dbReference type="ChEBI" id="CHEBI:15378"/>
        <dbReference type="ChEBI" id="CHEBI:30616"/>
        <dbReference type="ChEBI" id="CHEBI:43474"/>
        <dbReference type="ChEBI" id="CHEBI:456216"/>
    </reaction>
    <physiologicalReaction direction="left-to-right" evidence="4">
        <dbReference type="Rhea" id="RHEA:13066"/>
    </physiologicalReaction>
</comment>
<comment type="subunit">
    <text evidence="2">May be a homodimer, which associates with multiple calmodulin or myosin light chains.</text>
</comment>
<comment type="interaction">
    <interactant intactId="EBI-1040586">
        <id>Q02440</id>
    </interactant>
    <interactant intactId="EBI-358570">
        <id>P14649</id>
        <label>MYL6B</label>
    </interactant>
    <organismsDiffer>true</organismsDiffer>
    <experiments>2</experiments>
</comment>
<comment type="subcellular location">
    <subcellularLocation>
        <location evidence="12">Golgi apparatus membrane</location>
    </subcellularLocation>
</comment>
<comment type="tissue specificity">
    <text evidence="11">Neuronal and non-neuronal cells of the brain.</text>
</comment>
<comment type="similarity">
    <text evidence="12">Belongs to the TRAFAC class myosin-kinesin ATPase superfamily. Myosin family.</text>
</comment>
<name>MYO5A_CHICK</name>